<feature type="chain" id="PRO_1000131748" description="Co-chaperone protein HscB">
    <location>
        <begin position="1"/>
        <end position="171"/>
    </location>
</feature>
<feature type="domain" description="J" evidence="1">
    <location>
        <begin position="2"/>
        <end position="74"/>
    </location>
</feature>
<reference key="1">
    <citation type="journal article" date="2011" name="J. Bacteriol.">
        <title>Comparative genomics of 28 Salmonella enterica isolates: evidence for CRISPR-mediated adaptive sublineage evolution.</title>
        <authorList>
            <person name="Fricke W.F."/>
            <person name="Mammel M.K."/>
            <person name="McDermott P.F."/>
            <person name="Tartera C."/>
            <person name="White D.G."/>
            <person name="Leclerc J.E."/>
            <person name="Ravel J."/>
            <person name="Cebula T.A."/>
        </authorList>
    </citation>
    <scope>NUCLEOTIDE SEQUENCE [LARGE SCALE GENOMIC DNA]</scope>
    <source>
        <strain>SL483</strain>
    </source>
</reference>
<dbReference type="EMBL" id="CP001138">
    <property type="protein sequence ID" value="ACH50564.1"/>
    <property type="molecule type" value="Genomic_DNA"/>
</dbReference>
<dbReference type="RefSeq" id="WP_000384394.1">
    <property type="nucleotide sequence ID" value="NC_011149.1"/>
</dbReference>
<dbReference type="SMR" id="B5F1B7"/>
<dbReference type="KEGG" id="sea:SeAg_B2695"/>
<dbReference type="HOGENOM" id="CLU_068529_2_0_6"/>
<dbReference type="Proteomes" id="UP000008819">
    <property type="component" value="Chromosome"/>
</dbReference>
<dbReference type="GO" id="GO:1990230">
    <property type="term" value="C:iron-sulfur cluster transfer complex"/>
    <property type="evidence" value="ECO:0007669"/>
    <property type="project" value="TreeGrafter"/>
</dbReference>
<dbReference type="GO" id="GO:0001671">
    <property type="term" value="F:ATPase activator activity"/>
    <property type="evidence" value="ECO:0007669"/>
    <property type="project" value="InterPro"/>
</dbReference>
<dbReference type="GO" id="GO:0051087">
    <property type="term" value="F:protein-folding chaperone binding"/>
    <property type="evidence" value="ECO:0007669"/>
    <property type="project" value="InterPro"/>
</dbReference>
<dbReference type="GO" id="GO:0044571">
    <property type="term" value="P:[2Fe-2S] cluster assembly"/>
    <property type="evidence" value="ECO:0007669"/>
    <property type="project" value="InterPro"/>
</dbReference>
<dbReference type="GO" id="GO:0051259">
    <property type="term" value="P:protein complex oligomerization"/>
    <property type="evidence" value="ECO:0007669"/>
    <property type="project" value="InterPro"/>
</dbReference>
<dbReference type="GO" id="GO:0006457">
    <property type="term" value="P:protein folding"/>
    <property type="evidence" value="ECO:0007669"/>
    <property type="project" value="UniProtKB-UniRule"/>
</dbReference>
<dbReference type="CDD" id="cd06257">
    <property type="entry name" value="DnaJ"/>
    <property type="match status" value="1"/>
</dbReference>
<dbReference type="FunFam" id="1.10.287.110:FF:000008">
    <property type="entry name" value="Co-chaperone protein HscB"/>
    <property type="match status" value="1"/>
</dbReference>
<dbReference type="FunFam" id="1.20.1280.20:FF:000001">
    <property type="entry name" value="Co-chaperone protein HscB"/>
    <property type="match status" value="1"/>
</dbReference>
<dbReference type="Gene3D" id="1.10.287.110">
    <property type="entry name" value="DnaJ domain"/>
    <property type="match status" value="1"/>
</dbReference>
<dbReference type="Gene3D" id="1.20.1280.20">
    <property type="entry name" value="HscB, C-terminal domain"/>
    <property type="match status" value="1"/>
</dbReference>
<dbReference type="HAMAP" id="MF_00682">
    <property type="entry name" value="HscB"/>
    <property type="match status" value="1"/>
</dbReference>
<dbReference type="InterPro" id="IPR001623">
    <property type="entry name" value="DnaJ_domain"/>
</dbReference>
<dbReference type="InterPro" id="IPR004640">
    <property type="entry name" value="HscB"/>
</dbReference>
<dbReference type="InterPro" id="IPR036386">
    <property type="entry name" value="HscB_C_sf"/>
</dbReference>
<dbReference type="InterPro" id="IPR009073">
    <property type="entry name" value="HscB_oligo_C"/>
</dbReference>
<dbReference type="InterPro" id="IPR036869">
    <property type="entry name" value="J_dom_sf"/>
</dbReference>
<dbReference type="NCBIfam" id="TIGR00714">
    <property type="entry name" value="hscB"/>
    <property type="match status" value="1"/>
</dbReference>
<dbReference type="NCBIfam" id="NF003449">
    <property type="entry name" value="PRK05014.1"/>
    <property type="match status" value="1"/>
</dbReference>
<dbReference type="PANTHER" id="PTHR14021">
    <property type="entry name" value="IRON-SULFUR CLUSTER CO-CHAPERONE PROTEIN HSCB"/>
    <property type="match status" value="1"/>
</dbReference>
<dbReference type="PANTHER" id="PTHR14021:SF15">
    <property type="entry name" value="IRON-SULFUR CLUSTER CO-CHAPERONE PROTEIN HSCB"/>
    <property type="match status" value="1"/>
</dbReference>
<dbReference type="Pfam" id="PF07743">
    <property type="entry name" value="HSCB_C"/>
    <property type="match status" value="1"/>
</dbReference>
<dbReference type="SMART" id="SM00271">
    <property type="entry name" value="DnaJ"/>
    <property type="match status" value="1"/>
</dbReference>
<dbReference type="SUPFAM" id="SSF46565">
    <property type="entry name" value="Chaperone J-domain"/>
    <property type="match status" value="1"/>
</dbReference>
<dbReference type="SUPFAM" id="SSF47144">
    <property type="entry name" value="HSC20 (HSCB), C-terminal oligomerisation domain"/>
    <property type="match status" value="1"/>
</dbReference>
<dbReference type="PROSITE" id="PS50076">
    <property type="entry name" value="DNAJ_2"/>
    <property type="match status" value="1"/>
</dbReference>
<keyword id="KW-0143">Chaperone</keyword>
<name>HSCB_SALA4</name>
<sequence length="171" mass="19995">MDYFTLFGLPARYQIDTQALSLRFQDLQRQYHPDKFANGTQAQQLAAVQQSATINQAWQTLRHPLTRAEYLLSLHGFDLASEQHTVRDTAFLMEQLTLREELDDIDQSKDDVRLESFIKRVQKMFDARLQQMVEQLDNAAWDAAADTVRKLRFLDKLRSSAEQLEEKLLDF</sequence>
<gene>
    <name evidence="1" type="primary">hscB</name>
    <name type="ordered locus">SeAg_B2695</name>
</gene>
<proteinExistence type="inferred from homology"/>
<comment type="function">
    <text evidence="1">Co-chaperone involved in the maturation of iron-sulfur cluster-containing proteins. Seems to help targeting proteins to be folded toward HscA.</text>
</comment>
<comment type="subunit">
    <text evidence="1">Interacts with HscA and stimulates its ATPase activity. Interacts with IscU.</text>
</comment>
<comment type="similarity">
    <text evidence="1">Belongs to the HscB family.</text>
</comment>
<protein>
    <recommendedName>
        <fullName evidence="1">Co-chaperone protein HscB</fullName>
    </recommendedName>
    <alternativeName>
        <fullName evidence="1">Hsc20</fullName>
    </alternativeName>
</protein>
<evidence type="ECO:0000255" key="1">
    <source>
        <dbReference type="HAMAP-Rule" id="MF_00682"/>
    </source>
</evidence>
<accession>B5F1B7</accession>
<organism>
    <name type="scientific">Salmonella agona (strain SL483)</name>
    <dbReference type="NCBI Taxonomy" id="454166"/>
    <lineage>
        <taxon>Bacteria</taxon>
        <taxon>Pseudomonadati</taxon>
        <taxon>Pseudomonadota</taxon>
        <taxon>Gammaproteobacteria</taxon>
        <taxon>Enterobacterales</taxon>
        <taxon>Enterobacteriaceae</taxon>
        <taxon>Salmonella</taxon>
    </lineage>
</organism>